<accession>A0A0K3AVY3</accession>
<evidence type="ECO:0000255" key="1"/>
<evidence type="ECO:0000256" key="2">
    <source>
        <dbReference type="SAM" id="MobiDB-lite"/>
    </source>
</evidence>
<evidence type="ECO:0000269" key="3">
    <source>
    </source>
</evidence>
<evidence type="ECO:0000303" key="4">
    <source>
    </source>
</evidence>
<evidence type="ECO:0000305" key="5"/>
<protein>
    <recommendedName>
        <fullName evidence="5">2S albumin seed storage protein PINP1</fullName>
    </recommendedName>
    <allergenName evidence="4">Pin p 1</allergenName>
</protein>
<proteinExistence type="evidence at protein level"/>
<sequence length="164" mass="18973">MGVFSSPMSTLRWVTLFAALLSLLEWGTAHEDIVMDGDQVVQQQGRSCDPQRLSACRDYLQRRREQPSERCCEELQRMSPHCRCRAIERALDQSQSYDSSTDSDSQDGAPLNQRRRRRGEGRGREEEEAVERAEELPNRCNLRESPRRCDIRRHSRYSIIGGSD</sequence>
<name>PINP1_PINPI</name>
<feature type="signal peptide" evidence="1">
    <location>
        <begin position="1"/>
        <end position="29"/>
    </location>
</feature>
<feature type="chain" id="PRO_5005494271" description="2S albumin seed storage protein PINP1">
    <location>
        <begin position="30"/>
        <end position="164"/>
    </location>
</feature>
<feature type="region of interest" description="Disordered" evidence="2">
    <location>
        <begin position="92"/>
        <end position="137"/>
    </location>
</feature>
<feature type="compositionally biased region" description="Low complexity" evidence="2">
    <location>
        <begin position="92"/>
        <end position="107"/>
    </location>
</feature>
<feature type="compositionally biased region" description="Basic and acidic residues" evidence="2">
    <location>
        <begin position="120"/>
        <end position="137"/>
    </location>
</feature>
<feature type="glycosylation site" description="N-linked (GalNAc...) asparagine" evidence="3">
    <location>
        <position position="138"/>
    </location>
</feature>
<comment type="allergen">
    <text evidence="3">Causes an allergic reaction in human (PubMed:27211622). Binds to IgE of patients allergic to pine nut (PubMed:27211622). Causes activation of basophils sensitized with IgE of patients allergic to pine nut (PubMed:27211622).</text>
</comment>
<comment type="similarity">
    <text evidence="5">Belongs to the 2S seed storage albumins family.</text>
</comment>
<organism>
    <name type="scientific">Pinus pinea</name>
    <name type="common">Italian stone pine</name>
    <dbReference type="NCBI Taxonomy" id="3346"/>
    <lineage>
        <taxon>Eukaryota</taxon>
        <taxon>Viridiplantae</taxon>
        <taxon>Streptophyta</taxon>
        <taxon>Embryophyta</taxon>
        <taxon>Tracheophyta</taxon>
        <taxon>Spermatophyta</taxon>
        <taxon>Pinopsida</taxon>
        <taxon>Pinidae</taxon>
        <taxon>Conifers I</taxon>
        <taxon>Pinales</taxon>
        <taxon>Pinaceae</taxon>
        <taxon>Pinus</taxon>
        <taxon>Pinus subgen. Pinus</taxon>
    </lineage>
</organism>
<reference key="1">
    <citation type="journal article" date="2016" name="Food Chem.">
        <title>Pin p 1 is a major allergen in pine nut and the first food allergen described in the plant group of gymnosperms.</title>
        <authorList>
            <person name="Cabanillas B."/>
            <person name="Crespo J.F."/>
            <person name="Maleki S.J."/>
            <person name="Rodriguez J."/>
            <person name="Novak N."/>
        </authorList>
    </citation>
    <scope>NUCLEOTIDE SEQUENCE [MRNA]</scope>
    <scope>IDENTIFICATION BY MASS SPECTROMETRY</scope>
    <scope>ALLERGEN</scope>
    <scope>GLYCOSYLATION AT ASN-138</scope>
</reference>
<dbReference type="EMBL" id="LN876267">
    <property type="protein sequence ID" value="CTQ87571.1"/>
    <property type="molecule type" value="mRNA"/>
</dbReference>
<dbReference type="SMR" id="A0A0K3AVY3"/>
<dbReference type="Allergome" id="10430">
    <property type="allergen name" value="Pin p 1"/>
</dbReference>
<dbReference type="Allergome" id="11854">
    <property type="allergen name" value="Pin p 1.0101"/>
</dbReference>
<dbReference type="GlyCosmos" id="A0A0K3AVY3">
    <property type="glycosylation" value="1 site, No reported glycans"/>
</dbReference>
<dbReference type="iPTMnet" id="A0A0K3AVY3"/>
<dbReference type="GO" id="GO:0045735">
    <property type="term" value="F:nutrient reservoir activity"/>
    <property type="evidence" value="ECO:0007669"/>
    <property type="project" value="UniProtKB-KW"/>
</dbReference>
<dbReference type="Gene3D" id="1.10.110.10">
    <property type="entry name" value="Plant lipid-transfer and hydrophobic proteins"/>
    <property type="match status" value="1"/>
</dbReference>
<dbReference type="InterPro" id="IPR036312">
    <property type="entry name" value="Bifun_inhib/LTP/seed_sf"/>
</dbReference>
<dbReference type="InterPro" id="IPR016140">
    <property type="entry name" value="Bifunc_inhib/LTP/seed_store"/>
</dbReference>
<dbReference type="InterPro" id="IPR000617">
    <property type="entry name" value="Napin/2SS/CON"/>
</dbReference>
<dbReference type="PANTHER" id="PTHR35496">
    <property type="entry name" value="2S SEED STORAGE PROTEIN 1-RELATED"/>
    <property type="match status" value="1"/>
</dbReference>
<dbReference type="PANTHER" id="PTHR35496:SF4">
    <property type="entry name" value="2S SULFUR-RICH SEED STORAGE PROTEIN 2-LIKE"/>
    <property type="match status" value="1"/>
</dbReference>
<dbReference type="Pfam" id="PF00234">
    <property type="entry name" value="Tryp_alpha_amyl"/>
    <property type="match status" value="1"/>
</dbReference>
<dbReference type="SMART" id="SM00499">
    <property type="entry name" value="AAI"/>
    <property type="match status" value="1"/>
</dbReference>
<dbReference type="SUPFAM" id="SSF47699">
    <property type="entry name" value="Bifunctional inhibitor/lipid-transfer protein/seed storage 2S albumin"/>
    <property type="match status" value="1"/>
</dbReference>
<keyword id="KW-0020">Allergen</keyword>
<keyword id="KW-0325">Glycoprotein</keyword>
<keyword id="KW-0708">Seed storage protein</keyword>
<keyword id="KW-0732">Signal</keyword>
<keyword id="KW-0758">Storage protein</keyword>
<gene>
    <name evidence="4" type="primary">PINP1</name>
</gene>